<organism>
    <name type="scientific">Acaryochloris marina (strain MBIC 11017)</name>
    <dbReference type="NCBI Taxonomy" id="329726"/>
    <lineage>
        <taxon>Bacteria</taxon>
        <taxon>Bacillati</taxon>
        <taxon>Cyanobacteriota</taxon>
        <taxon>Cyanophyceae</taxon>
        <taxon>Acaryochloridales</taxon>
        <taxon>Acaryochloridaceae</taxon>
        <taxon>Acaryochloris</taxon>
    </lineage>
</organism>
<name>ARLY_ACAM1</name>
<dbReference type="EC" id="4.3.2.1" evidence="1"/>
<dbReference type="EMBL" id="CP000828">
    <property type="protein sequence ID" value="ABW29392.1"/>
    <property type="molecule type" value="Genomic_DNA"/>
</dbReference>
<dbReference type="RefSeq" id="WP_012164716.1">
    <property type="nucleotide sequence ID" value="NC_009925.1"/>
</dbReference>
<dbReference type="SMR" id="B0CEZ5"/>
<dbReference type="STRING" id="329726.AM1_4415"/>
<dbReference type="KEGG" id="amr:AM1_4415"/>
<dbReference type="eggNOG" id="COG0165">
    <property type="taxonomic scope" value="Bacteria"/>
</dbReference>
<dbReference type="HOGENOM" id="CLU_027272_2_3_3"/>
<dbReference type="OrthoDB" id="9769623at2"/>
<dbReference type="UniPathway" id="UPA00068">
    <property type="reaction ID" value="UER00114"/>
</dbReference>
<dbReference type="Proteomes" id="UP000000268">
    <property type="component" value="Chromosome"/>
</dbReference>
<dbReference type="GO" id="GO:0005829">
    <property type="term" value="C:cytosol"/>
    <property type="evidence" value="ECO:0007669"/>
    <property type="project" value="TreeGrafter"/>
</dbReference>
<dbReference type="GO" id="GO:0004056">
    <property type="term" value="F:argininosuccinate lyase activity"/>
    <property type="evidence" value="ECO:0007669"/>
    <property type="project" value="UniProtKB-UniRule"/>
</dbReference>
<dbReference type="GO" id="GO:0042450">
    <property type="term" value="P:arginine biosynthetic process via ornithine"/>
    <property type="evidence" value="ECO:0007669"/>
    <property type="project" value="InterPro"/>
</dbReference>
<dbReference type="GO" id="GO:0006526">
    <property type="term" value="P:L-arginine biosynthetic process"/>
    <property type="evidence" value="ECO:0007669"/>
    <property type="project" value="UniProtKB-UniRule"/>
</dbReference>
<dbReference type="CDD" id="cd01359">
    <property type="entry name" value="Argininosuccinate_lyase"/>
    <property type="match status" value="1"/>
</dbReference>
<dbReference type="FunFam" id="1.10.275.10:FF:000002">
    <property type="entry name" value="Argininosuccinate lyase"/>
    <property type="match status" value="1"/>
</dbReference>
<dbReference type="FunFam" id="1.10.40.30:FF:000001">
    <property type="entry name" value="Argininosuccinate lyase"/>
    <property type="match status" value="1"/>
</dbReference>
<dbReference type="FunFam" id="1.20.200.10:FF:000015">
    <property type="entry name" value="argininosuccinate lyase isoform X2"/>
    <property type="match status" value="1"/>
</dbReference>
<dbReference type="Gene3D" id="1.10.40.30">
    <property type="entry name" value="Fumarase/aspartase (C-terminal domain)"/>
    <property type="match status" value="1"/>
</dbReference>
<dbReference type="Gene3D" id="1.20.200.10">
    <property type="entry name" value="Fumarase/aspartase (Central domain)"/>
    <property type="match status" value="1"/>
</dbReference>
<dbReference type="Gene3D" id="1.10.275.10">
    <property type="entry name" value="Fumarase/aspartase (N-terminal domain)"/>
    <property type="match status" value="1"/>
</dbReference>
<dbReference type="HAMAP" id="MF_00006">
    <property type="entry name" value="Arg_succ_lyase"/>
    <property type="match status" value="1"/>
</dbReference>
<dbReference type="InterPro" id="IPR029419">
    <property type="entry name" value="Arg_succ_lyase_C"/>
</dbReference>
<dbReference type="InterPro" id="IPR009049">
    <property type="entry name" value="Argininosuccinate_lyase"/>
</dbReference>
<dbReference type="InterPro" id="IPR024083">
    <property type="entry name" value="Fumarase/histidase_N"/>
</dbReference>
<dbReference type="InterPro" id="IPR020557">
    <property type="entry name" value="Fumarate_lyase_CS"/>
</dbReference>
<dbReference type="InterPro" id="IPR000362">
    <property type="entry name" value="Fumarate_lyase_fam"/>
</dbReference>
<dbReference type="InterPro" id="IPR022761">
    <property type="entry name" value="Fumarate_lyase_N"/>
</dbReference>
<dbReference type="InterPro" id="IPR008948">
    <property type="entry name" value="L-Aspartase-like"/>
</dbReference>
<dbReference type="NCBIfam" id="TIGR00838">
    <property type="entry name" value="argH"/>
    <property type="match status" value="1"/>
</dbReference>
<dbReference type="PANTHER" id="PTHR43814">
    <property type="entry name" value="ARGININOSUCCINATE LYASE"/>
    <property type="match status" value="1"/>
</dbReference>
<dbReference type="PANTHER" id="PTHR43814:SF1">
    <property type="entry name" value="ARGININOSUCCINATE LYASE"/>
    <property type="match status" value="1"/>
</dbReference>
<dbReference type="Pfam" id="PF14698">
    <property type="entry name" value="ASL_C2"/>
    <property type="match status" value="1"/>
</dbReference>
<dbReference type="Pfam" id="PF00206">
    <property type="entry name" value="Lyase_1"/>
    <property type="match status" value="1"/>
</dbReference>
<dbReference type="PRINTS" id="PR00145">
    <property type="entry name" value="ARGSUCLYASE"/>
</dbReference>
<dbReference type="PRINTS" id="PR00149">
    <property type="entry name" value="FUMRATELYASE"/>
</dbReference>
<dbReference type="SUPFAM" id="SSF48557">
    <property type="entry name" value="L-aspartase-like"/>
    <property type="match status" value="1"/>
</dbReference>
<dbReference type="PROSITE" id="PS00163">
    <property type="entry name" value="FUMARATE_LYASES"/>
    <property type="match status" value="1"/>
</dbReference>
<feature type="chain" id="PRO_0000335822" description="Argininosuccinate lyase">
    <location>
        <begin position="1"/>
        <end position="476"/>
    </location>
</feature>
<gene>
    <name evidence="1" type="primary">argH</name>
    <name type="ordered locus">AM1_4415</name>
</gene>
<evidence type="ECO:0000255" key="1">
    <source>
        <dbReference type="HAMAP-Rule" id="MF_00006"/>
    </source>
</evidence>
<protein>
    <recommendedName>
        <fullName evidence="1">Argininosuccinate lyase</fullName>
        <shortName evidence="1">ASAL</shortName>
        <ecNumber evidence="1">4.3.2.1</ecNumber>
    </recommendedName>
    <alternativeName>
        <fullName evidence="1">Arginosuccinase</fullName>
    </alternativeName>
</protein>
<comment type="catalytic activity">
    <reaction evidence="1">
        <text>2-(N(omega)-L-arginino)succinate = fumarate + L-arginine</text>
        <dbReference type="Rhea" id="RHEA:24020"/>
        <dbReference type="ChEBI" id="CHEBI:29806"/>
        <dbReference type="ChEBI" id="CHEBI:32682"/>
        <dbReference type="ChEBI" id="CHEBI:57472"/>
        <dbReference type="EC" id="4.3.2.1"/>
    </reaction>
</comment>
<comment type="pathway">
    <text evidence="1">Amino-acid biosynthesis; L-arginine biosynthesis; L-arginine from L-ornithine and carbamoyl phosphate: step 3/3.</text>
</comment>
<comment type="subcellular location">
    <subcellularLocation>
        <location evidence="1">Cytoplasm</location>
    </subcellularLocation>
</comment>
<comment type="similarity">
    <text evidence="1">Belongs to the lyase 1 family. Argininosuccinate lyase subfamily.</text>
</comment>
<accession>B0CEZ5</accession>
<sequence>MTSSPVPPTNSSDSSDSKVWSQRFESALNPVIAAFNASIHFDIALIEYDLTGSQAHVQMLAHSGIISQAEADAIDQGLEAIRQEYRQGQFQPGIEAEDIHFAVENRLIELIGDTGKKLHTGRSRNDQVGTDLRLYLHDQILQVQTLIRNWQQALVILASDHVQTLIPGYTHLQRAQPISLAHHLLAYFEMAERDWQRLREIDRRVNVSPLGLGALAGTPFPIDRQYTADKLGFADLYRNSLDGVSDRDFAIEFLCAASLIMVHLSRFSEEVILWASEEFGFIKLKDSCATGSSIMPQKKNPDVPELVRGKSGRVFGHLQSLLVVMKGLPLAYNKDLQEDKEAIFDGVTTIKACLEAMTILVAEGLEFQTPRLESAVGEDFSNATDVADYLSKQGVPFREAYNIVGAVVKTCLSQNKLLKDLTLEEWQQFHPQFADDIYSAISPRQVVAVRNSFGGTGFTQVQNALEQAKTLLSQSK</sequence>
<reference key="1">
    <citation type="journal article" date="2008" name="Proc. Natl. Acad. Sci. U.S.A.">
        <title>Niche adaptation and genome expansion in the chlorophyll d-producing cyanobacterium Acaryochloris marina.</title>
        <authorList>
            <person name="Swingley W.D."/>
            <person name="Chen M."/>
            <person name="Cheung P.C."/>
            <person name="Conrad A.L."/>
            <person name="Dejesa L.C."/>
            <person name="Hao J."/>
            <person name="Honchak B.M."/>
            <person name="Karbach L.E."/>
            <person name="Kurdoglu A."/>
            <person name="Lahiri S."/>
            <person name="Mastrian S.D."/>
            <person name="Miyashita H."/>
            <person name="Page L."/>
            <person name="Ramakrishna P."/>
            <person name="Satoh S."/>
            <person name="Sattley W.M."/>
            <person name="Shimada Y."/>
            <person name="Taylor H.L."/>
            <person name="Tomo T."/>
            <person name="Tsuchiya T."/>
            <person name="Wang Z.T."/>
            <person name="Raymond J."/>
            <person name="Mimuro M."/>
            <person name="Blankenship R.E."/>
            <person name="Touchman J.W."/>
        </authorList>
    </citation>
    <scope>NUCLEOTIDE SEQUENCE [LARGE SCALE GENOMIC DNA]</scope>
    <source>
        <strain>MBIC 11017</strain>
    </source>
</reference>
<proteinExistence type="inferred from homology"/>
<keyword id="KW-0028">Amino-acid biosynthesis</keyword>
<keyword id="KW-0055">Arginine biosynthesis</keyword>
<keyword id="KW-0963">Cytoplasm</keyword>
<keyword id="KW-0456">Lyase</keyword>
<keyword id="KW-1185">Reference proteome</keyword>